<protein>
    <recommendedName>
        <fullName>Protein PBN1</fullName>
    </recommendedName>
</protein>
<name>PBN1_KLULA</name>
<reference key="1">
    <citation type="journal article" date="2004" name="Nature">
        <title>Genome evolution in yeasts.</title>
        <authorList>
            <person name="Dujon B."/>
            <person name="Sherman D."/>
            <person name="Fischer G."/>
            <person name="Durrens P."/>
            <person name="Casaregola S."/>
            <person name="Lafontaine I."/>
            <person name="de Montigny J."/>
            <person name="Marck C."/>
            <person name="Neuveglise C."/>
            <person name="Talla E."/>
            <person name="Goffard N."/>
            <person name="Frangeul L."/>
            <person name="Aigle M."/>
            <person name="Anthouard V."/>
            <person name="Babour A."/>
            <person name="Barbe V."/>
            <person name="Barnay S."/>
            <person name="Blanchin S."/>
            <person name="Beckerich J.-M."/>
            <person name="Beyne E."/>
            <person name="Bleykasten C."/>
            <person name="Boisrame A."/>
            <person name="Boyer J."/>
            <person name="Cattolico L."/>
            <person name="Confanioleri F."/>
            <person name="de Daruvar A."/>
            <person name="Despons L."/>
            <person name="Fabre E."/>
            <person name="Fairhead C."/>
            <person name="Ferry-Dumazet H."/>
            <person name="Groppi A."/>
            <person name="Hantraye F."/>
            <person name="Hennequin C."/>
            <person name="Jauniaux N."/>
            <person name="Joyet P."/>
            <person name="Kachouri R."/>
            <person name="Kerrest A."/>
            <person name="Koszul R."/>
            <person name="Lemaire M."/>
            <person name="Lesur I."/>
            <person name="Ma L."/>
            <person name="Muller H."/>
            <person name="Nicaud J.-M."/>
            <person name="Nikolski M."/>
            <person name="Oztas S."/>
            <person name="Ozier-Kalogeropoulos O."/>
            <person name="Pellenz S."/>
            <person name="Potier S."/>
            <person name="Richard G.-F."/>
            <person name="Straub M.-L."/>
            <person name="Suleau A."/>
            <person name="Swennen D."/>
            <person name="Tekaia F."/>
            <person name="Wesolowski-Louvel M."/>
            <person name="Westhof E."/>
            <person name="Wirth B."/>
            <person name="Zeniou-Meyer M."/>
            <person name="Zivanovic Y."/>
            <person name="Bolotin-Fukuhara M."/>
            <person name="Thierry A."/>
            <person name="Bouchier C."/>
            <person name="Caudron B."/>
            <person name="Scarpelli C."/>
            <person name="Gaillardin C."/>
            <person name="Weissenbach J."/>
            <person name="Wincker P."/>
            <person name="Souciet J.-L."/>
        </authorList>
    </citation>
    <scope>NUCLEOTIDE SEQUENCE [LARGE SCALE GENOMIC DNA]</scope>
    <source>
        <strain>ATCC 8585 / CBS 2359 / DSM 70799 / NBRC 1267 / NRRL Y-1140 / WM37</strain>
    </source>
</reference>
<organism>
    <name type="scientific">Kluyveromyces lactis (strain ATCC 8585 / CBS 2359 / DSM 70799 / NBRC 1267 / NRRL Y-1140 / WM37)</name>
    <name type="common">Yeast</name>
    <name type="synonym">Candida sphaerica</name>
    <dbReference type="NCBI Taxonomy" id="284590"/>
    <lineage>
        <taxon>Eukaryota</taxon>
        <taxon>Fungi</taxon>
        <taxon>Dikarya</taxon>
        <taxon>Ascomycota</taxon>
        <taxon>Saccharomycotina</taxon>
        <taxon>Saccharomycetes</taxon>
        <taxon>Saccharomycetales</taxon>
        <taxon>Saccharomycetaceae</taxon>
        <taxon>Kluyveromyces</taxon>
    </lineage>
</organism>
<evidence type="ECO:0000250" key="1"/>
<evidence type="ECO:0000255" key="2"/>
<evidence type="ECO:0000305" key="3"/>
<proteinExistence type="inferred from homology"/>
<comment type="function">
    <text evidence="1">Required for proper folding and/or the stability of a subset of proteins in the endoplasmic reticulum. Component of glycosylphosphatidylinositol-mannosyltransferase 1 which transfers the first of the 4 mannoses in the GPI-anchor precursors during GPI-anchor biosynthesis. Probably acts by stabilizing the mannosyltransferase GPI14 (By similarity).</text>
</comment>
<comment type="pathway">
    <text>Glycolipid biosynthesis; glycosylphosphatidylinositol-anchor biosynthesis.</text>
</comment>
<comment type="subcellular location">
    <subcellularLocation>
        <location evidence="1">Endoplasmic reticulum membrane</location>
        <topology evidence="1">Single-pass type III membrane protein</topology>
    </subcellularLocation>
</comment>
<comment type="similarity">
    <text evidence="3">Belongs to the PIGX family.</text>
</comment>
<sequence>MSVQTIQSESFIEEKRRITVLLDRDGRSVEEKVVNRDGVITIPNQSGHVQDRAVLFVPQLASRPDFIHISWKRNAEADITPIKSYIPYGFNIFTNSSGSIAKFIDTPVGKVYYSDTFEDNALSKWFPPEFVDQLLRYSEDNDLDITVTRGRVEVNRYYELTDDNLFPLNGTESVKTEAGIFQVDTEDDTDTSLSGLRCTWHTGSGALNKCQRTLFFYNQIYADKSSLSEVSLTLSEPVNLHPVVQIDLTSKRPIHNCEYYAYFNLPKYFFIDQFQSIPTLLFGEHDLELPEYKLSGFGSISLFTLQPGSINEVTLHSRYIKPTNDGSAFFEAAFTPQVFYACDTSIELTKRSPFYTGKIGYEHFFTDNTKFYYLNSTKMTINLPKLDSSDNLCIQLFTLGLVLFSVLYLIRKLF</sequence>
<keyword id="KW-0256">Endoplasmic reticulum</keyword>
<keyword id="KW-0325">Glycoprotein</keyword>
<keyword id="KW-0337">GPI-anchor biosynthesis</keyword>
<keyword id="KW-0472">Membrane</keyword>
<keyword id="KW-1185">Reference proteome</keyword>
<keyword id="KW-0812">Transmembrane</keyword>
<keyword id="KW-1133">Transmembrane helix</keyword>
<gene>
    <name type="primary">PBN1</name>
    <name type="ordered locus">KLLA0C00759g</name>
</gene>
<feature type="chain" id="PRO_0000246306" description="Protein PBN1">
    <location>
        <begin position="1"/>
        <end position="414"/>
    </location>
</feature>
<feature type="topological domain" description="Lumenal" evidence="2">
    <location>
        <begin position="1"/>
        <end position="390"/>
    </location>
</feature>
<feature type="transmembrane region" description="Helical" evidence="2">
    <location>
        <begin position="391"/>
        <end position="410"/>
    </location>
</feature>
<feature type="topological domain" description="Cytoplasmic" evidence="2">
    <location>
        <begin position="411"/>
        <end position="414"/>
    </location>
</feature>
<feature type="glycosylation site" description="N-linked (GlcNAc...) asparagine" evidence="2">
    <location>
        <position position="44"/>
    </location>
</feature>
<feature type="glycosylation site" description="N-linked (GlcNAc...) asparagine" evidence="2">
    <location>
        <position position="95"/>
    </location>
</feature>
<feature type="glycosylation site" description="N-linked (GlcNAc...) asparagine" evidence="2">
    <location>
        <position position="169"/>
    </location>
</feature>
<feature type="glycosylation site" description="N-linked (GlcNAc...) asparagine" evidence="2">
    <location>
        <position position="375"/>
    </location>
</feature>
<accession>Q6CV11</accession>
<dbReference type="EMBL" id="CR382123">
    <property type="protein sequence ID" value="CAH01079.1"/>
    <property type="molecule type" value="Genomic_DNA"/>
</dbReference>
<dbReference type="RefSeq" id="XP_452228.1">
    <property type="nucleotide sequence ID" value="XM_452228.1"/>
</dbReference>
<dbReference type="FunCoup" id="Q6CV11">
    <property type="interactions" value="51"/>
</dbReference>
<dbReference type="STRING" id="284590.Q6CV11"/>
<dbReference type="GlyCosmos" id="Q6CV11">
    <property type="glycosylation" value="4 sites, No reported glycans"/>
</dbReference>
<dbReference type="PaxDb" id="284590-Q6CV11"/>
<dbReference type="KEGG" id="kla:KLLA0_C00759g"/>
<dbReference type="eggNOG" id="ENOG502QS8N">
    <property type="taxonomic scope" value="Eukaryota"/>
</dbReference>
<dbReference type="HOGENOM" id="CLU_055666_0_0_1"/>
<dbReference type="InParanoid" id="Q6CV11"/>
<dbReference type="OMA" id="DKAWGSE"/>
<dbReference type="UniPathway" id="UPA00196"/>
<dbReference type="Proteomes" id="UP000000598">
    <property type="component" value="Chromosome C"/>
</dbReference>
<dbReference type="GO" id="GO:0005789">
    <property type="term" value="C:endoplasmic reticulum membrane"/>
    <property type="evidence" value="ECO:0007669"/>
    <property type="project" value="UniProtKB-SubCell"/>
</dbReference>
<dbReference type="GO" id="GO:1990529">
    <property type="term" value="C:glycosylphosphatidylinositol-mannosyltransferase I complex"/>
    <property type="evidence" value="ECO:0007669"/>
    <property type="project" value="TreeGrafter"/>
</dbReference>
<dbReference type="GO" id="GO:0000030">
    <property type="term" value="F:mannosyltransferase activity"/>
    <property type="evidence" value="ECO:0007669"/>
    <property type="project" value="TreeGrafter"/>
</dbReference>
<dbReference type="GO" id="GO:0006506">
    <property type="term" value="P:GPI anchor biosynthetic process"/>
    <property type="evidence" value="ECO:0007669"/>
    <property type="project" value="UniProtKB-UniPathway"/>
</dbReference>
<dbReference type="InterPro" id="IPR042322">
    <property type="entry name" value="Pbn1"/>
</dbReference>
<dbReference type="InterPro" id="IPR013233">
    <property type="entry name" value="PIG-X/PBN1"/>
</dbReference>
<dbReference type="PANTHER" id="PTHR28533">
    <property type="entry name" value="PROTEIN PBN1"/>
    <property type="match status" value="1"/>
</dbReference>
<dbReference type="PANTHER" id="PTHR28533:SF1">
    <property type="entry name" value="PROTEIN PBN1"/>
    <property type="match status" value="1"/>
</dbReference>
<dbReference type="Pfam" id="PF08320">
    <property type="entry name" value="PIG-X"/>
    <property type="match status" value="1"/>
</dbReference>
<dbReference type="SMART" id="SM00780">
    <property type="entry name" value="PIG-X"/>
    <property type="match status" value="1"/>
</dbReference>